<gene>
    <name type="primary">ydaB</name>
    <name type="ordered locus">BSU04170</name>
</gene>
<accession>P96575</accession>
<accession>Q797N0</accession>
<reference key="1">
    <citation type="submission" date="1997-03" db="EMBL/GenBank/DDBJ databases">
        <title>A 148 kbp sequence of the region between 35 and 47 degree of the Bacillus subtilis genome.</title>
        <authorList>
            <person name="Kasahara Y."/>
            <person name="Nakai S."/>
            <person name="Lee S."/>
            <person name="Sadaie Y."/>
            <person name="Ogasawara N."/>
        </authorList>
    </citation>
    <scope>NUCLEOTIDE SEQUENCE [GENOMIC DNA]</scope>
    <source>
        <strain>168</strain>
    </source>
</reference>
<reference key="2">
    <citation type="journal article" date="1997" name="Nature">
        <title>The complete genome sequence of the Gram-positive bacterium Bacillus subtilis.</title>
        <authorList>
            <person name="Kunst F."/>
            <person name="Ogasawara N."/>
            <person name="Moszer I."/>
            <person name="Albertini A.M."/>
            <person name="Alloni G."/>
            <person name="Azevedo V."/>
            <person name="Bertero M.G."/>
            <person name="Bessieres P."/>
            <person name="Bolotin A."/>
            <person name="Borchert S."/>
            <person name="Borriss R."/>
            <person name="Boursier L."/>
            <person name="Brans A."/>
            <person name="Braun M."/>
            <person name="Brignell S.C."/>
            <person name="Bron S."/>
            <person name="Brouillet S."/>
            <person name="Bruschi C.V."/>
            <person name="Caldwell B."/>
            <person name="Capuano V."/>
            <person name="Carter N.M."/>
            <person name="Choi S.-K."/>
            <person name="Codani J.-J."/>
            <person name="Connerton I.F."/>
            <person name="Cummings N.J."/>
            <person name="Daniel R.A."/>
            <person name="Denizot F."/>
            <person name="Devine K.M."/>
            <person name="Duesterhoeft A."/>
            <person name="Ehrlich S.D."/>
            <person name="Emmerson P.T."/>
            <person name="Entian K.-D."/>
            <person name="Errington J."/>
            <person name="Fabret C."/>
            <person name="Ferrari E."/>
            <person name="Foulger D."/>
            <person name="Fritz C."/>
            <person name="Fujita M."/>
            <person name="Fujita Y."/>
            <person name="Fuma S."/>
            <person name="Galizzi A."/>
            <person name="Galleron N."/>
            <person name="Ghim S.-Y."/>
            <person name="Glaser P."/>
            <person name="Goffeau A."/>
            <person name="Golightly E.J."/>
            <person name="Grandi G."/>
            <person name="Guiseppi G."/>
            <person name="Guy B.J."/>
            <person name="Haga K."/>
            <person name="Haiech J."/>
            <person name="Harwood C.R."/>
            <person name="Henaut A."/>
            <person name="Hilbert H."/>
            <person name="Holsappel S."/>
            <person name="Hosono S."/>
            <person name="Hullo M.-F."/>
            <person name="Itaya M."/>
            <person name="Jones L.-M."/>
            <person name="Joris B."/>
            <person name="Karamata D."/>
            <person name="Kasahara Y."/>
            <person name="Klaerr-Blanchard M."/>
            <person name="Klein C."/>
            <person name="Kobayashi Y."/>
            <person name="Koetter P."/>
            <person name="Koningstein G."/>
            <person name="Krogh S."/>
            <person name="Kumano M."/>
            <person name="Kurita K."/>
            <person name="Lapidus A."/>
            <person name="Lardinois S."/>
            <person name="Lauber J."/>
            <person name="Lazarevic V."/>
            <person name="Lee S.-M."/>
            <person name="Levine A."/>
            <person name="Liu H."/>
            <person name="Masuda S."/>
            <person name="Mauel C."/>
            <person name="Medigue C."/>
            <person name="Medina N."/>
            <person name="Mellado R.P."/>
            <person name="Mizuno M."/>
            <person name="Moestl D."/>
            <person name="Nakai S."/>
            <person name="Noback M."/>
            <person name="Noone D."/>
            <person name="O'Reilly M."/>
            <person name="Ogawa K."/>
            <person name="Ogiwara A."/>
            <person name="Oudega B."/>
            <person name="Park S.-H."/>
            <person name="Parro V."/>
            <person name="Pohl T.M."/>
            <person name="Portetelle D."/>
            <person name="Porwollik S."/>
            <person name="Prescott A.M."/>
            <person name="Presecan E."/>
            <person name="Pujic P."/>
            <person name="Purnelle B."/>
            <person name="Rapoport G."/>
            <person name="Rey M."/>
            <person name="Reynolds S."/>
            <person name="Rieger M."/>
            <person name="Rivolta C."/>
            <person name="Rocha E."/>
            <person name="Roche B."/>
            <person name="Rose M."/>
            <person name="Sadaie Y."/>
            <person name="Sato T."/>
            <person name="Scanlan E."/>
            <person name="Schleich S."/>
            <person name="Schroeter R."/>
            <person name="Scoffone F."/>
            <person name="Sekiguchi J."/>
            <person name="Sekowska A."/>
            <person name="Seror S.J."/>
            <person name="Serror P."/>
            <person name="Shin B.-S."/>
            <person name="Soldo B."/>
            <person name="Sorokin A."/>
            <person name="Tacconi E."/>
            <person name="Takagi T."/>
            <person name="Takahashi H."/>
            <person name="Takemaru K."/>
            <person name="Takeuchi M."/>
            <person name="Tamakoshi A."/>
            <person name="Tanaka T."/>
            <person name="Terpstra P."/>
            <person name="Tognoni A."/>
            <person name="Tosato V."/>
            <person name="Uchiyama S."/>
            <person name="Vandenbol M."/>
            <person name="Vannier F."/>
            <person name="Vassarotti A."/>
            <person name="Viari A."/>
            <person name="Wambutt R."/>
            <person name="Wedler E."/>
            <person name="Wedler H."/>
            <person name="Weitzenegger T."/>
            <person name="Winters P."/>
            <person name="Wipat A."/>
            <person name="Yamamoto H."/>
            <person name="Yamane K."/>
            <person name="Yasumoto K."/>
            <person name="Yata K."/>
            <person name="Yoshida K."/>
            <person name="Yoshikawa H.-F."/>
            <person name="Zumstein E."/>
            <person name="Yoshikawa H."/>
            <person name="Danchin A."/>
        </authorList>
    </citation>
    <scope>NUCLEOTIDE SEQUENCE [LARGE SCALE GENOMIC DNA]</scope>
    <source>
        <strain>168</strain>
    </source>
</reference>
<reference key="3">
    <citation type="journal article" date="2009" name="Microbiology">
        <title>From a consortium sequence to a unified sequence: the Bacillus subtilis 168 reference genome a decade later.</title>
        <authorList>
            <person name="Barbe V."/>
            <person name="Cruveiller S."/>
            <person name="Kunst F."/>
            <person name="Lenoble P."/>
            <person name="Meurice G."/>
            <person name="Sekowska A."/>
            <person name="Vallenet D."/>
            <person name="Wang T."/>
            <person name="Moszer I."/>
            <person name="Medigue C."/>
            <person name="Danchin A."/>
        </authorList>
    </citation>
    <scope>SEQUENCE REVISION TO C-TERMINUS</scope>
</reference>
<organism>
    <name type="scientific">Bacillus subtilis (strain 168)</name>
    <dbReference type="NCBI Taxonomy" id="224308"/>
    <lineage>
        <taxon>Bacteria</taxon>
        <taxon>Bacillati</taxon>
        <taxon>Bacillota</taxon>
        <taxon>Bacilli</taxon>
        <taxon>Bacillales</taxon>
        <taxon>Bacillaceae</taxon>
        <taxon>Bacillus</taxon>
    </lineage>
</organism>
<sequence>METLQHLILHDMPNSEEIEAVKSGDHTLTYKGYRKRINQLANAMLQKGIQKGDRVALLCKNGHPASTVMFAALEIGAVVVPVSWQLKPYEMTGILKASEPKAMFYGAEFKEILDEVLPELSSLCVTMETGTAYETSAEFEALFAGPDHLPETEMVSPDDTALLMFTSGTTGNPKRCMITHGGIYRYVKKSNSSIARMKGLRFLACHPIYHTSALICIMLGTFAETTFVFTKDQDPVHMLKVIEEEKIQTVMALPVFYTYLLEAWEKHQTDLSSLVILMTGGTKVPSSLISRYLDIGIPLAHGYGSTEAWGISTWTPDMGMDKAASAGKPVAGVKVKVEDPLTGEELPQGEIGEIVVHTPFLFKGYEDNPEATAKVLQNGWFRTGDSGYVDEDGFIFITGRYKDVIIYGGDNVYPDQVEEVIQQIPGILETAVVGIPDPLYGEKPKAFIVKNGGQRITEEDVIAFCKERLSAYKIPEVEFVNELPKNNLGKVKKDVLRNQAVHS</sequence>
<protein>
    <recommendedName>
        <fullName>Putative acyl--CoA ligase YdaB</fullName>
        <ecNumber>6.2.1.-</ecNumber>
    </recommendedName>
</protein>
<evidence type="ECO:0000305" key="1"/>
<name>YDAB_BACSU</name>
<proteinExistence type="inferred from homology"/>
<dbReference type="EC" id="6.2.1.-"/>
<dbReference type="EMBL" id="AB001488">
    <property type="protein sequence ID" value="BAA19255.1"/>
    <property type="status" value="ALT_FRAME"/>
    <property type="molecule type" value="Genomic_DNA"/>
</dbReference>
<dbReference type="EMBL" id="AL009126">
    <property type="protein sequence ID" value="CAB12224.2"/>
    <property type="molecule type" value="Genomic_DNA"/>
</dbReference>
<dbReference type="PIR" id="B69768">
    <property type="entry name" value="B69768"/>
</dbReference>
<dbReference type="RefSeq" id="NP_388298.2">
    <property type="nucleotide sequence ID" value="NC_000964.3"/>
</dbReference>
<dbReference type="RefSeq" id="WP_003246534.1">
    <property type="nucleotide sequence ID" value="NZ_OZ025638.1"/>
</dbReference>
<dbReference type="SMR" id="P96575"/>
<dbReference type="FunCoup" id="P96575">
    <property type="interactions" value="32"/>
</dbReference>
<dbReference type="STRING" id="224308.BSU04170"/>
<dbReference type="PaxDb" id="224308-BSU04170"/>
<dbReference type="EnsemblBacteria" id="CAB12224">
    <property type="protein sequence ID" value="CAB12224"/>
    <property type="gene ID" value="BSU_04170"/>
</dbReference>
<dbReference type="GeneID" id="938246"/>
<dbReference type="KEGG" id="bsu:BSU04170"/>
<dbReference type="PATRIC" id="fig|224308.179.peg.443"/>
<dbReference type="eggNOG" id="COG0318">
    <property type="taxonomic scope" value="Bacteria"/>
</dbReference>
<dbReference type="InParanoid" id="P96575"/>
<dbReference type="OrthoDB" id="9757771at2"/>
<dbReference type="PhylomeDB" id="P96575"/>
<dbReference type="BioCyc" id="BSUB:BSU04170-MONOMER"/>
<dbReference type="Proteomes" id="UP000001570">
    <property type="component" value="Chromosome"/>
</dbReference>
<dbReference type="GO" id="GO:0016878">
    <property type="term" value="F:acid-thiol ligase activity"/>
    <property type="evidence" value="ECO:0007669"/>
    <property type="project" value="UniProtKB-ARBA"/>
</dbReference>
<dbReference type="GO" id="GO:0005524">
    <property type="term" value="F:ATP binding"/>
    <property type="evidence" value="ECO:0007669"/>
    <property type="project" value="UniProtKB-KW"/>
</dbReference>
<dbReference type="FunFam" id="3.30.300.30:FF:000008">
    <property type="entry name" value="2,3-dihydroxybenzoate-AMP ligase"/>
    <property type="match status" value="1"/>
</dbReference>
<dbReference type="Gene3D" id="3.30.300.30">
    <property type="match status" value="1"/>
</dbReference>
<dbReference type="Gene3D" id="3.40.50.12780">
    <property type="entry name" value="N-terminal domain of ligase-like"/>
    <property type="match status" value="1"/>
</dbReference>
<dbReference type="InterPro" id="IPR025110">
    <property type="entry name" value="AMP-bd_C"/>
</dbReference>
<dbReference type="InterPro" id="IPR045851">
    <property type="entry name" value="AMP-bd_C_sf"/>
</dbReference>
<dbReference type="InterPro" id="IPR020845">
    <property type="entry name" value="AMP-binding_CS"/>
</dbReference>
<dbReference type="InterPro" id="IPR000873">
    <property type="entry name" value="AMP-dep_synth/lig_dom"/>
</dbReference>
<dbReference type="InterPro" id="IPR042099">
    <property type="entry name" value="ANL_N_sf"/>
</dbReference>
<dbReference type="InterPro" id="IPR050237">
    <property type="entry name" value="ATP-dep_AMP-bd_enzyme"/>
</dbReference>
<dbReference type="PANTHER" id="PTHR43767">
    <property type="entry name" value="LONG-CHAIN-FATTY-ACID--COA LIGASE"/>
    <property type="match status" value="1"/>
</dbReference>
<dbReference type="PANTHER" id="PTHR43767:SF1">
    <property type="entry name" value="NONRIBOSOMAL PEPTIDE SYNTHASE PES1 (EUROFUNG)-RELATED"/>
    <property type="match status" value="1"/>
</dbReference>
<dbReference type="Pfam" id="PF00501">
    <property type="entry name" value="AMP-binding"/>
    <property type="match status" value="1"/>
</dbReference>
<dbReference type="Pfam" id="PF13193">
    <property type="entry name" value="AMP-binding_C"/>
    <property type="match status" value="1"/>
</dbReference>
<dbReference type="SUPFAM" id="SSF56801">
    <property type="entry name" value="Acetyl-CoA synthetase-like"/>
    <property type="match status" value="1"/>
</dbReference>
<dbReference type="PROSITE" id="PS00455">
    <property type="entry name" value="AMP_BINDING"/>
    <property type="match status" value="1"/>
</dbReference>
<feature type="chain" id="PRO_0000360649" description="Putative acyl--CoA ligase YdaB">
    <location>
        <begin position="1"/>
        <end position="503"/>
    </location>
</feature>
<keyword id="KW-0067">ATP-binding</keyword>
<keyword id="KW-0436">Ligase</keyword>
<keyword id="KW-0547">Nucleotide-binding</keyword>
<keyword id="KW-1185">Reference proteome</keyword>
<comment type="similarity">
    <text evidence="1">Belongs to the ATP-dependent AMP-binding enzyme family.</text>
</comment>
<comment type="sequence caution" evidence="1">
    <conflict type="frameshift">
        <sequence resource="EMBL-CDS" id="BAA19255"/>
    </conflict>
</comment>